<evidence type="ECO:0000250" key="1"/>
<evidence type="ECO:0000256" key="2">
    <source>
        <dbReference type="SAM" id="MobiDB-lite"/>
    </source>
</evidence>
<evidence type="ECO:0000305" key="3"/>
<evidence type="ECO:0007829" key="4">
    <source>
        <dbReference type="PDB" id="4V67"/>
    </source>
</evidence>
<evidence type="ECO:0007829" key="5">
    <source>
        <dbReference type="PDB" id="4V9N"/>
    </source>
</evidence>
<keyword id="KW-0002">3D-structure</keyword>
<keyword id="KW-0687">Ribonucleoprotein</keyword>
<keyword id="KW-0689">Ribosomal protein</keyword>
<keyword id="KW-0694">RNA-binding</keyword>
<keyword id="KW-0699">rRNA-binding</keyword>
<keyword id="KW-0820">tRNA-binding</keyword>
<dbReference type="EMBL" id="AE017221">
    <property type="protein sequence ID" value="AAS81645.1"/>
    <property type="molecule type" value="Genomic_DNA"/>
</dbReference>
<dbReference type="RefSeq" id="WP_008633368.1">
    <property type="nucleotide sequence ID" value="NC_005835.1"/>
</dbReference>
<dbReference type="PDB" id="2R1G">
    <property type="method" value="EM"/>
    <property type="resolution" value="12.50 A"/>
    <property type="chains" value="I=2-126"/>
</dbReference>
<dbReference type="PDB" id="4KVB">
    <property type="method" value="X-ray"/>
    <property type="resolution" value="4.20 A"/>
    <property type="chains" value="M=1-126"/>
</dbReference>
<dbReference type="PDB" id="4V4I">
    <property type="method" value="X-ray"/>
    <property type="resolution" value="3.71 A"/>
    <property type="chains" value="n=1-126"/>
</dbReference>
<dbReference type="PDB" id="4V4J">
    <property type="method" value="X-ray"/>
    <property type="resolution" value="3.83 A"/>
    <property type="chains" value="n=1-126"/>
</dbReference>
<dbReference type="PDB" id="4V63">
    <property type="method" value="X-ray"/>
    <property type="resolution" value="3.21 A"/>
    <property type="chains" value="AM/CM=1-126"/>
</dbReference>
<dbReference type="PDB" id="4V67">
    <property type="method" value="X-ray"/>
    <property type="resolution" value="3.00 A"/>
    <property type="chains" value="AM/CM=1-126"/>
</dbReference>
<dbReference type="PDB" id="4V7P">
    <property type="method" value="X-ray"/>
    <property type="resolution" value="3.62 A"/>
    <property type="chains" value="AM/DM=2-118"/>
</dbReference>
<dbReference type="PDB" id="4V83">
    <property type="method" value="X-ray"/>
    <property type="resolution" value="3.50 A"/>
    <property type="chains" value="AM/CM=2-117"/>
</dbReference>
<dbReference type="PDB" id="4V84">
    <property type="method" value="X-ray"/>
    <property type="resolution" value="3.40 A"/>
    <property type="chains" value="AM/CM=2-117"/>
</dbReference>
<dbReference type="PDB" id="4V9J">
    <property type="method" value="X-ray"/>
    <property type="resolution" value="3.86 A"/>
    <property type="chains" value="AM/CM=2-126"/>
</dbReference>
<dbReference type="PDB" id="4V9K">
    <property type="method" value="X-ray"/>
    <property type="resolution" value="3.50 A"/>
    <property type="chains" value="AM/CM=2-126"/>
</dbReference>
<dbReference type="PDB" id="4V9L">
    <property type="method" value="X-ray"/>
    <property type="resolution" value="3.50 A"/>
    <property type="chains" value="AM/CM=2-126"/>
</dbReference>
<dbReference type="PDB" id="4V9M">
    <property type="method" value="X-ray"/>
    <property type="resolution" value="4.00 A"/>
    <property type="chains" value="AM/CM=2-126"/>
</dbReference>
<dbReference type="PDB" id="4V9N">
    <property type="method" value="X-ray"/>
    <property type="resolution" value="3.40 A"/>
    <property type="chains" value="AM/CM=2-118"/>
</dbReference>
<dbReference type="PDB" id="4V9Q">
    <property type="method" value="X-ray"/>
    <property type="resolution" value="3.40 A"/>
    <property type="chains" value="BM/DM=2-118"/>
</dbReference>
<dbReference type="PDB" id="4W29">
    <property type="method" value="X-ray"/>
    <property type="resolution" value="3.80 A"/>
    <property type="chains" value="AM/CM=2-126"/>
</dbReference>
<dbReference type="PDB" id="4XEJ">
    <property type="method" value="X-ray"/>
    <property type="resolution" value="3.80 A"/>
    <property type="chains" value="AS13/BS13=2-118"/>
</dbReference>
<dbReference type="PDB" id="5J4D">
    <property type="method" value="X-ray"/>
    <property type="resolution" value="3.10 A"/>
    <property type="chains" value="AD/VA=1-126"/>
</dbReference>
<dbReference type="PDB" id="5V8I">
    <property type="method" value="X-ray"/>
    <property type="resolution" value="3.25 A"/>
    <property type="chains" value="1m/2m=1-126"/>
</dbReference>
<dbReference type="PDB" id="6B4V">
    <property type="method" value="X-ray"/>
    <property type="resolution" value="3.40 A"/>
    <property type="chains" value="VA/ZC=1-126"/>
</dbReference>
<dbReference type="PDB" id="6BOH">
    <property type="method" value="X-ray"/>
    <property type="resolution" value="3.40 A"/>
    <property type="chains" value="BD/WA=1-126"/>
</dbReference>
<dbReference type="PDB" id="6BOK">
    <property type="method" value="X-ray"/>
    <property type="resolution" value="3.55 A"/>
    <property type="chains" value="UA/XC=1-126"/>
</dbReference>
<dbReference type="PDB" id="6N1D">
    <property type="method" value="X-ray"/>
    <property type="resolution" value="3.20 A"/>
    <property type="chains" value="AS13/BS13=2-126"/>
</dbReference>
<dbReference type="PDBsum" id="2R1G"/>
<dbReference type="PDBsum" id="4KVB"/>
<dbReference type="PDBsum" id="4V4I"/>
<dbReference type="PDBsum" id="4V4J"/>
<dbReference type="PDBsum" id="4V63"/>
<dbReference type="PDBsum" id="4V67"/>
<dbReference type="PDBsum" id="4V7P"/>
<dbReference type="PDBsum" id="4V83"/>
<dbReference type="PDBsum" id="4V84"/>
<dbReference type="PDBsum" id="4V9J"/>
<dbReference type="PDBsum" id="4V9K"/>
<dbReference type="PDBsum" id="4V9L"/>
<dbReference type="PDBsum" id="4V9M"/>
<dbReference type="PDBsum" id="4V9N"/>
<dbReference type="PDBsum" id="4V9Q"/>
<dbReference type="PDBsum" id="4W29"/>
<dbReference type="PDBsum" id="4XEJ"/>
<dbReference type="PDBsum" id="5J4D"/>
<dbReference type="PDBsum" id="5V8I"/>
<dbReference type="PDBsum" id="6B4V"/>
<dbReference type="PDBsum" id="6BOH"/>
<dbReference type="PDBsum" id="6BOK"/>
<dbReference type="PDBsum" id="6N1D"/>
<dbReference type="SMR" id="P62655"/>
<dbReference type="IntAct" id="P62655">
    <property type="interactions" value="4"/>
</dbReference>
<dbReference type="GeneID" id="3167962"/>
<dbReference type="KEGG" id="tth:TT_C1303"/>
<dbReference type="eggNOG" id="COG0099">
    <property type="taxonomic scope" value="Bacteria"/>
</dbReference>
<dbReference type="HOGENOM" id="CLU_103849_1_2_0"/>
<dbReference type="OrthoDB" id="9803610at2"/>
<dbReference type="EvolutionaryTrace" id="P62655"/>
<dbReference type="Proteomes" id="UP000000592">
    <property type="component" value="Chromosome"/>
</dbReference>
<dbReference type="GO" id="GO:0005829">
    <property type="term" value="C:cytosol"/>
    <property type="evidence" value="ECO:0007669"/>
    <property type="project" value="TreeGrafter"/>
</dbReference>
<dbReference type="GO" id="GO:0015935">
    <property type="term" value="C:small ribosomal subunit"/>
    <property type="evidence" value="ECO:0007669"/>
    <property type="project" value="TreeGrafter"/>
</dbReference>
<dbReference type="GO" id="GO:0019843">
    <property type="term" value="F:rRNA binding"/>
    <property type="evidence" value="ECO:0007669"/>
    <property type="project" value="UniProtKB-UniRule"/>
</dbReference>
<dbReference type="GO" id="GO:0003735">
    <property type="term" value="F:structural constituent of ribosome"/>
    <property type="evidence" value="ECO:0007669"/>
    <property type="project" value="InterPro"/>
</dbReference>
<dbReference type="GO" id="GO:0000049">
    <property type="term" value="F:tRNA binding"/>
    <property type="evidence" value="ECO:0007669"/>
    <property type="project" value="UniProtKB-UniRule"/>
</dbReference>
<dbReference type="GO" id="GO:0006412">
    <property type="term" value="P:translation"/>
    <property type="evidence" value="ECO:0007669"/>
    <property type="project" value="UniProtKB-UniRule"/>
</dbReference>
<dbReference type="FunFam" id="1.10.8.50:FF:000001">
    <property type="entry name" value="30S ribosomal protein S13"/>
    <property type="match status" value="1"/>
</dbReference>
<dbReference type="FunFam" id="4.10.910.10:FF:000001">
    <property type="entry name" value="30S ribosomal protein S13"/>
    <property type="match status" value="1"/>
</dbReference>
<dbReference type="Gene3D" id="1.10.8.50">
    <property type="match status" value="1"/>
</dbReference>
<dbReference type="Gene3D" id="4.10.910.10">
    <property type="entry name" value="30s ribosomal protein s13, domain 2"/>
    <property type="match status" value="1"/>
</dbReference>
<dbReference type="HAMAP" id="MF_01315">
    <property type="entry name" value="Ribosomal_uS13"/>
    <property type="match status" value="1"/>
</dbReference>
<dbReference type="InterPro" id="IPR027437">
    <property type="entry name" value="Rbsml_uS13_C"/>
</dbReference>
<dbReference type="InterPro" id="IPR001892">
    <property type="entry name" value="Ribosomal_uS13"/>
</dbReference>
<dbReference type="InterPro" id="IPR010979">
    <property type="entry name" value="Ribosomal_uS13-like_H2TH"/>
</dbReference>
<dbReference type="InterPro" id="IPR019980">
    <property type="entry name" value="Ribosomal_uS13_bac-type"/>
</dbReference>
<dbReference type="InterPro" id="IPR018269">
    <property type="entry name" value="Ribosomal_uS13_CS"/>
</dbReference>
<dbReference type="NCBIfam" id="TIGR03631">
    <property type="entry name" value="uS13_bact"/>
    <property type="match status" value="1"/>
</dbReference>
<dbReference type="PANTHER" id="PTHR10871">
    <property type="entry name" value="30S RIBOSOMAL PROTEIN S13/40S RIBOSOMAL PROTEIN S18"/>
    <property type="match status" value="1"/>
</dbReference>
<dbReference type="PANTHER" id="PTHR10871:SF1">
    <property type="entry name" value="SMALL RIBOSOMAL SUBUNIT PROTEIN US13M"/>
    <property type="match status" value="1"/>
</dbReference>
<dbReference type="Pfam" id="PF00416">
    <property type="entry name" value="Ribosomal_S13"/>
    <property type="match status" value="1"/>
</dbReference>
<dbReference type="PIRSF" id="PIRSF002134">
    <property type="entry name" value="Ribosomal_S13"/>
    <property type="match status" value="1"/>
</dbReference>
<dbReference type="SUPFAM" id="SSF46946">
    <property type="entry name" value="S13-like H2TH domain"/>
    <property type="match status" value="1"/>
</dbReference>
<dbReference type="PROSITE" id="PS00646">
    <property type="entry name" value="RIBOSOMAL_S13_1"/>
    <property type="match status" value="1"/>
</dbReference>
<dbReference type="PROSITE" id="PS50159">
    <property type="entry name" value="RIBOSOMAL_S13_2"/>
    <property type="match status" value="1"/>
</dbReference>
<sequence length="126" mass="14305">MARIAGVEIPRNKRVDVALTYIYGIGKARAKEALEKTGINPATRVKDLTEAEVVRLREYVENTWKLEGELRAEVAANIKRLMDIGCYRGLRHRRGLPVRGQRTRTNARTRKGPRKTVAGKKKAPRK</sequence>
<feature type="initiator methionine" description="Removed" evidence="1">
    <location>
        <position position="1"/>
    </location>
</feature>
<feature type="chain" id="PRO_0000132159" description="Small ribosomal subunit protein uS13">
    <location>
        <begin position="2"/>
        <end position="126"/>
    </location>
</feature>
<feature type="region of interest" description="Disordered" evidence="2">
    <location>
        <begin position="95"/>
        <end position="126"/>
    </location>
</feature>
<feature type="strand" evidence="4">
    <location>
        <begin position="5"/>
        <end position="7"/>
    </location>
</feature>
<feature type="strand" evidence="4">
    <location>
        <begin position="12"/>
        <end position="14"/>
    </location>
</feature>
<feature type="helix" evidence="4">
    <location>
        <begin position="15"/>
        <end position="20"/>
    </location>
</feature>
<feature type="helix" evidence="4">
    <location>
        <begin position="27"/>
        <end position="35"/>
    </location>
</feature>
<feature type="turn" evidence="4">
    <location>
        <begin position="36"/>
        <end position="38"/>
    </location>
</feature>
<feature type="strand" evidence="4">
    <location>
        <begin position="41"/>
        <end position="47"/>
    </location>
</feature>
<feature type="helix" evidence="4">
    <location>
        <begin position="50"/>
        <end position="63"/>
    </location>
</feature>
<feature type="helix" evidence="4">
    <location>
        <begin position="67"/>
        <end position="84"/>
    </location>
</feature>
<feature type="helix" evidence="4">
    <location>
        <begin position="87"/>
        <end position="90"/>
    </location>
</feature>
<feature type="turn" evidence="4">
    <location>
        <begin position="91"/>
        <end position="95"/>
    </location>
</feature>
<feature type="strand" evidence="5">
    <location>
        <begin position="98"/>
        <end position="100"/>
    </location>
</feature>
<feature type="strand" evidence="4">
    <location>
        <begin position="103"/>
        <end position="105"/>
    </location>
</feature>
<feature type="helix" evidence="4">
    <location>
        <begin position="108"/>
        <end position="111"/>
    </location>
</feature>
<proteinExistence type="evidence at protein level"/>
<protein>
    <recommendedName>
        <fullName evidence="3">Small ribosomal subunit protein uS13</fullName>
    </recommendedName>
    <alternativeName>
        <fullName>30S ribosomal protein S13</fullName>
    </alternativeName>
</protein>
<name>RS13_THET2</name>
<organism>
    <name type="scientific">Thermus thermophilus (strain ATCC BAA-163 / DSM 7039 / HB27)</name>
    <dbReference type="NCBI Taxonomy" id="262724"/>
    <lineage>
        <taxon>Bacteria</taxon>
        <taxon>Thermotogati</taxon>
        <taxon>Deinococcota</taxon>
        <taxon>Deinococci</taxon>
        <taxon>Thermales</taxon>
        <taxon>Thermaceae</taxon>
        <taxon>Thermus</taxon>
    </lineage>
</organism>
<comment type="function">
    <text evidence="1">Located at the top of the head of the 30S subunit, it contacts several helices of the 16S rRNA. In the 70S ribosome it contacts the 23S rRNA (bridge B1a) and protein L5 of the 50S subunit (bridge B1b), connecting the 2 subunits; these bridges are implicated in subunit movement. Contacts the tRNAs in the A and P-sites (By similarity).</text>
</comment>
<comment type="subunit">
    <text evidence="1">Part of the 30S ribosomal subunit. Forms a loose heterodimer with protein S19. Forms two bridges to the 50S subunit in the 70S ribosome (By similarity).</text>
</comment>
<comment type="similarity">
    <text evidence="3">Belongs to the universal ribosomal protein uS13 family.</text>
</comment>
<reference key="1">
    <citation type="journal article" date="2004" name="Nat. Biotechnol.">
        <title>The genome sequence of the extreme thermophile Thermus thermophilus.</title>
        <authorList>
            <person name="Henne A."/>
            <person name="Brueggemann H."/>
            <person name="Raasch C."/>
            <person name="Wiezer A."/>
            <person name="Hartsch T."/>
            <person name="Liesegang H."/>
            <person name="Johann A."/>
            <person name="Lienard T."/>
            <person name="Gohl O."/>
            <person name="Martinez-Arias R."/>
            <person name="Jacobi C."/>
            <person name="Starkuviene V."/>
            <person name="Schlenczeck S."/>
            <person name="Dencker S."/>
            <person name="Huber R."/>
            <person name="Klenk H.-P."/>
            <person name="Kramer W."/>
            <person name="Merkl R."/>
            <person name="Gottschalk G."/>
            <person name="Fritz H.-J."/>
        </authorList>
    </citation>
    <scope>NUCLEOTIDE SEQUENCE [LARGE SCALE GENOMIC DNA]</scope>
    <source>
        <strain>ATCC BAA-163 / DSM 7039 / HB27</strain>
    </source>
</reference>
<gene>
    <name type="primary">rpsM</name>
    <name type="synonym">rps13</name>
    <name type="ordered locus">TT_C1303</name>
</gene>
<accession>P62655</accession>